<comment type="function">
    <text evidence="1 4">Baeyer-Villiger monooxygenase; part of the gene cluster that mediates the biosynthesis of the dimeric xanthones cryptosporioptides (PubMed:30996871). The pathway begins with the synthesis of atrochrysone thioester by the polyketide synthase dmx-nrPKS (Probable). The atrochrysone carboxyl ACP thioesterase dmxR1 then breaks the thioester bond and releases the atrochrysone carboxylic acid from dmx-nrPKS (Probable). Atrochrysone carboxylic acid is decarboxylated by the decarboxylase dmxR15, and oxidized by the anthrone oxygenase dmxR16 to yield emodin (Probable). Emodin is then reduced to emodin hydroquinone by the oxidoreductase dmxR7 (Probable). A-ring reduction by the short chain dehydrogenase dmxR18, dehydration by the scytalone dehydratase-like protein dmxR17 and probable spontaneous re-oxidation, results in overall deoxygenation to chrysophanol (PubMed:30996871). Baeyer-Villiger oxidation by the Baeyer-Villiger monooxygenase (BVMO) dmxR6 then yields monodictylactone in equilibrium with monodictyphenone (PubMed:30996871). In the case of the cryptosporioptides biosynthesis, monodictylactone is reduced at C-12 to an alcohol (by the short chain dehydrogenases dmxR12 or dmxR8) and hydroxylated at C-5 by dmxR9, yielding the electron-rich aromatic which could eliminate H(2)O to form the ortho-quinonemethide, followed by tautomerisation to paraquinone and complete the formal reduction to produce the 10-methylgroup (Probable). Conjugate addition of C-4a-OH to the resulting paraquinone by the monooxygenase dmxR10 then gives cyclohexadienone, which is then reduced at C-5 by the short chain dehydrogenase dmxR3 to give the dihydroxanthone (Probable). The 6,7-epoxide in the cryptosporioptides could be introduced by the cytochrome P450 monooxygenase dmxL3 (Probable). The highly reducing PKS dmxL2 manufactures butyrate, which is further carboxylated by dmxL1 to form ethylmalonate (PubMed:30996871). It is not yet clear whether the carboxylation occurs while the butyrate is attached to the ACP of dmxL2, but this unusual fungal metabolite could then be esterified to O-5 by the O-acetyltransferase dmxR13 (PubMed:30996871). Finally, dimerization performed by dmxR5 gives the observed dimers cryptosporioptides A, B and C as the final products of the pathway (PubMed:30996871).</text>
</comment>
<comment type="pathway">
    <text evidence="1">Secondary metabolite biosynthesis.</text>
</comment>
<comment type="disruption phenotype">
    <text evidence="1">Leads to the accumulation of chrysophanol.</text>
</comment>
<comment type="similarity">
    <text evidence="3">Belongs to the AflY oxidoreductase family.</text>
</comment>
<keyword id="KW-0560">Oxidoreductase</keyword>
<accession>A0A4P8DJZ3</accession>
<feature type="chain" id="PRO_0000453472" description="Baeyer-Villiger monooxygenase dmxR6">
    <location>
        <begin position="1"/>
        <end position="446"/>
    </location>
</feature>
<reference key="1">
    <citation type="journal article" date="2019" name="Chem. Sci.">
        <title>Structure revision of cryptosporioptides and determination of the genetic basis for dimeric xanthone biosynthesis in fungi.</title>
        <authorList>
            <person name="Greco C."/>
            <person name="de Mattos-Shipley K."/>
            <person name="Bailey A.M."/>
            <person name="Mulholland N.P."/>
            <person name="Vincent J.L."/>
            <person name="Willis C.L."/>
            <person name="Cox R.J."/>
            <person name="Simpson T.J."/>
        </authorList>
    </citation>
    <scope>NUCLEOTIDE SEQUENCE [GENOMIC DNA]</scope>
    <scope>FUNCTION</scope>
    <scope>DISRUPTION PHENOTYPE</scope>
    <scope>PATHWAY</scope>
    <source>
        <strain>8999</strain>
    </source>
</reference>
<proteinExistence type="inferred from homology"/>
<name>DMXR6_CRYX8</name>
<organism>
    <name type="scientific">Cryptosporiopsis sp. (strain 8999)</name>
    <dbReference type="NCBI Taxonomy" id="2572248"/>
    <lineage>
        <taxon>Eukaryota</taxon>
        <taxon>Fungi</taxon>
        <taxon>Dikarya</taxon>
        <taxon>Ascomycota</taxon>
        <taxon>Pezizomycotina</taxon>
        <taxon>Leotiomycetes</taxon>
        <taxon>Helotiales</taxon>
        <taxon>Dermateaceae</taxon>
        <taxon>Cryptosporiopsis</taxon>
    </lineage>
</organism>
<sequence>MAASPISLDPSHVGIIKVANIPSDSLTECNKLLMKNHEEYHMFFRDTAGHNHIVHSLLTILSLGASPKQLQDRYDDGIPIQRPIPKIDHELLEKLSDPEILLKTIGEITQYHTLLEFFKREIAAKGWKEAIQEYVLARTKIADTILARMYEGAYHPIIHLGLGIEFQQPIIVAEALAQAASHDNSNIGTLFHNAEAEAGISYPSRIPKPMIELINEVRANETIRTAPRWTDFGNKMRDGVVGRAGEAMASLAAQFRIRNDEEELKRSTAEMISTCAFFAGASQHEGRKKKIDFFYMHNVTSSLFFTVFIRQDWIKLEDRVRLVEWKARLDLAWYAVSGSAALDAKWISDYSNPASDGMGWEDLFTAVNEEHDDGHAAKFIRALKNGEQECSKYEQGEWADYFPMKGDMWLKLARMCQDTTTNRPPDLKWVPFTGFDQPWKRPDLAN</sequence>
<protein>
    <recommendedName>
        <fullName evidence="2">Baeyer-Villiger monooxygenase dmxR6</fullName>
        <shortName evidence="2">BVMO dmxR6</shortName>
        <ecNumber evidence="4">1.-.-.-</ecNumber>
    </recommendedName>
    <alternativeName>
        <fullName evidence="2">Dimeric xanthone biosynthesis cluster protein R6</fullName>
    </alternativeName>
</protein>
<dbReference type="EC" id="1.-.-.-" evidence="4"/>
<dbReference type="EMBL" id="MK182094">
    <property type="protein sequence ID" value="QCL09097.1"/>
    <property type="molecule type" value="Genomic_DNA"/>
</dbReference>
<dbReference type="SMR" id="A0A4P8DJZ3"/>
<dbReference type="GO" id="GO:0016491">
    <property type="term" value="F:oxidoreductase activity"/>
    <property type="evidence" value="ECO:0007669"/>
    <property type="project" value="UniProtKB-KW"/>
</dbReference>
<dbReference type="InterPro" id="IPR025337">
    <property type="entry name" value="Questin_oxidase-like"/>
</dbReference>
<dbReference type="PANTHER" id="PTHR35870:SF7">
    <property type="entry name" value="BAEYER-VILLIGER OXIDASE MDPL"/>
    <property type="match status" value="1"/>
</dbReference>
<dbReference type="PANTHER" id="PTHR35870">
    <property type="entry name" value="PROTEIN, PUTATIVE (AFU_ORTHOLOGUE AFUA_5G03330)-RELATED"/>
    <property type="match status" value="1"/>
</dbReference>
<dbReference type="Pfam" id="PF14027">
    <property type="entry name" value="Questin_oxidase"/>
    <property type="match status" value="1"/>
</dbReference>
<evidence type="ECO:0000269" key="1">
    <source>
    </source>
</evidence>
<evidence type="ECO:0000303" key="2">
    <source>
    </source>
</evidence>
<evidence type="ECO:0000305" key="3"/>
<evidence type="ECO:0000305" key="4">
    <source>
    </source>
</evidence>
<gene>
    <name evidence="2" type="primary">dmxR6</name>
</gene>